<evidence type="ECO:0000255" key="1">
    <source>
        <dbReference type="HAMAP-Rule" id="MF_00482"/>
    </source>
</evidence>
<name>PSAB_LOBMA</name>
<organism>
    <name type="scientific">Lobularia maritima</name>
    <name type="common">Sweet alyssum</name>
    <name type="synonym">Alyssum maritimum</name>
    <dbReference type="NCBI Taxonomy" id="226051"/>
    <lineage>
        <taxon>Eukaryota</taxon>
        <taxon>Viridiplantae</taxon>
        <taxon>Streptophyta</taxon>
        <taxon>Embryophyta</taxon>
        <taxon>Tracheophyta</taxon>
        <taxon>Spermatophyta</taxon>
        <taxon>Magnoliopsida</taxon>
        <taxon>eudicotyledons</taxon>
        <taxon>Gunneridae</taxon>
        <taxon>Pentapetalae</taxon>
        <taxon>rosids</taxon>
        <taxon>malvids</taxon>
        <taxon>Brassicales</taxon>
        <taxon>Brassicaceae</taxon>
        <taxon>Anastaticeae</taxon>
        <taxon>Lobularia</taxon>
    </lineage>
</organism>
<dbReference type="EC" id="1.97.1.12" evidence="1"/>
<dbReference type="EMBL" id="AP009375">
    <property type="protein sequence ID" value="BAF50548.1"/>
    <property type="molecule type" value="Genomic_DNA"/>
</dbReference>
<dbReference type="RefSeq" id="YP_001123724.1">
    <property type="nucleotide sequence ID" value="NC_009274.1"/>
</dbReference>
<dbReference type="SMR" id="A4QLJ3"/>
<dbReference type="GeneID" id="4964806"/>
<dbReference type="GO" id="GO:0009535">
    <property type="term" value="C:chloroplast thylakoid membrane"/>
    <property type="evidence" value="ECO:0007669"/>
    <property type="project" value="UniProtKB-SubCell"/>
</dbReference>
<dbReference type="GO" id="GO:0009522">
    <property type="term" value="C:photosystem I"/>
    <property type="evidence" value="ECO:0007669"/>
    <property type="project" value="UniProtKB-KW"/>
</dbReference>
<dbReference type="GO" id="GO:0051539">
    <property type="term" value="F:4 iron, 4 sulfur cluster binding"/>
    <property type="evidence" value="ECO:0007669"/>
    <property type="project" value="UniProtKB-KW"/>
</dbReference>
<dbReference type="GO" id="GO:0016168">
    <property type="term" value="F:chlorophyll binding"/>
    <property type="evidence" value="ECO:0007669"/>
    <property type="project" value="UniProtKB-KW"/>
</dbReference>
<dbReference type="GO" id="GO:0009055">
    <property type="term" value="F:electron transfer activity"/>
    <property type="evidence" value="ECO:0007669"/>
    <property type="project" value="UniProtKB-UniRule"/>
</dbReference>
<dbReference type="GO" id="GO:0000287">
    <property type="term" value="F:magnesium ion binding"/>
    <property type="evidence" value="ECO:0007669"/>
    <property type="project" value="UniProtKB-UniRule"/>
</dbReference>
<dbReference type="GO" id="GO:0016491">
    <property type="term" value="F:oxidoreductase activity"/>
    <property type="evidence" value="ECO:0007669"/>
    <property type="project" value="UniProtKB-KW"/>
</dbReference>
<dbReference type="GO" id="GO:0015979">
    <property type="term" value="P:photosynthesis"/>
    <property type="evidence" value="ECO:0007669"/>
    <property type="project" value="UniProtKB-UniRule"/>
</dbReference>
<dbReference type="FunFam" id="1.20.1130.10:FF:000001">
    <property type="entry name" value="Photosystem I P700 chlorophyll a apoprotein A2"/>
    <property type="match status" value="1"/>
</dbReference>
<dbReference type="Gene3D" id="1.20.1130.10">
    <property type="entry name" value="Photosystem I PsaA/PsaB"/>
    <property type="match status" value="1"/>
</dbReference>
<dbReference type="HAMAP" id="MF_00482">
    <property type="entry name" value="PSI_PsaB"/>
    <property type="match status" value="1"/>
</dbReference>
<dbReference type="InterPro" id="IPR001280">
    <property type="entry name" value="PSI_PsaA/B"/>
</dbReference>
<dbReference type="InterPro" id="IPR020586">
    <property type="entry name" value="PSI_PsaA/B_CS"/>
</dbReference>
<dbReference type="InterPro" id="IPR036408">
    <property type="entry name" value="PSI_PsaA/B_sf"/>
</dbReference>
<dbReference type="InterPro" id="IPR006244">
    <property type="entry name" value="PSI_PsaB"/>
</dbReference>
<dbReference type="NCBIfam" id="TIGR01336">
    <property type="entry name" value="psaB"/>
    <property type="match status" value="1"/>
</dbReference>
<dbReference type="PANTHER" id="PTHR30128">
    <property type="entry name" value="OUTER MEMBRANE PROTEIN, OMPA-RELATED"/>
    <property type="match status" value="1"/>
</dbReference>
<dbReference type="PANTHER" id="PTHR30128:SF19">
    <property type="entry name" value="PHOTOSYSTEM I P700 CHLOROPHYLL A APOPROTEIN A1-RELATED"/>
    <property type="match status" value="1"/>
</dbReference>
<dbReference type="Pfam" id="PF00223">
    <property type="entry name" value="PsaA_PsaB"/>
    <property type="match status" value="1"/>
</dbReference>
<dbReference type="PIRSF" id="PIRSF002905">
    <property type="entry name" value="PSI_A"/>
    <property type="match status" value="1"/>
</dbReference>
<dbReference type="PRINTS" id="PR00257">
    <property type="entry name" value="PHOTSYSPSAAB"/>
</dbReference>
<dbReference type="SUPFAM" id="SSF81558">
    <property type="entry name" value="Photosystem I subunits PsaA/PsaB"/>
    <property type="match status" value="1"/>
</dbReference>
<dbReference type="PROSITE" id="PS00419">
    <property type="entry name" value="PHOTOSYSTEM_I_PSAAB"/>
    <property type="match status" value="1"/>
</dbReference>
<gene>
    <name evidence="1" type="primary">psaB</name>
</gene>
<feature type="chain" id="PRO_0000300049" description="Photosystem I P700 chlorophyll a apoprotein A2">
    <location>
        <begin position="1"/>
        <end position="734"/>
    </location>
</feature>
<feature type="transmembrane region" description="Helical; Name=I" evidence="1">
    <location>
        <begin position="46"/>
        <end position="69"/>
    </location>
</feature>
<feature type="transmembrane region" description="Helical; Name=II" evidence="1">
    <location>
        <begin position="135"/>
        <end position="158"/>
    </location>
</feature>
<feature type="transmembrane region" description="Helical; Name=III" evidence="1">
    <location>
        <begin position="175"/>
        <end position="199"/>
    </location>
</feature>
<feature type="transmembrane region" description="Helical; Name=IV" evidence="1">
    <location>
        <begin position="273"/>
        <end position="291"/>
    </location>
</feature>
<feature type="transmembrane region" description="Helical; Name=V" evidence="1">
    <location>
        <begin position="330"/>
        <end position="353"/>
    </location>
</feature>
<feature type="transmembrane region" description="Helical; Name=VI" evidence="1">
    <location>
        <begin position="369"/>
        <end position="395"/>
    </location>
</feature>
<feature type="transmembrane region" description="Helical; Name=VII" evidence="1">
    <location>
        <begin position="417"/>
        <end position="439"/>
    </location>
</feature>
<feature type="transmembrane region" description="Helical; Name=VIII" evidence="1">
    <location>
        <begin position="517"/>
        <end position="535"/>
    </location>
</feature>
<feature type="transmembrane region" description="Helical; Name=IX" evidence="1">
    <location>
        <begin position="575"/>
        <end position="596"/>
    </location>
</feature>
<feature type="transmembrane region" description="Helical; Name=X" evidence="1">
    <location>
        <begin position="643"/>
        <end position="665"/>
    </location>
</feature>
<feature type="transmembrane region" description="Helical; Name=XI" evidence="1">
    <location>
        <begin position="707"/>
        <end position="727"/>
    </location>
</feature>
<feature type="binding site" evidence="1">
    <location>
        <position position="559"/>
    </location>
    <ligand>
        <name>[4Fe-4S] cluster</name>
        <dbReference type="ChEBI" id="CHEBI:49883"/>
        <note>ligand shared between dimeric partners</note>
    </ligand>
</feature>
<feature type="binding site" evidence="1">
    <location>
        <position position="568"/>
    </location>
    <ligand>
        <name>[4Fe-4S] cluster</name>
        <dbReference type="ChEBI" id="CHEBI:49883"/>
        <note>ligand shared between dimeric partners</note>
    </ligand>
</feature>
<feature type="binding site" description="axial binding residue" evidence="1">
    <location>
        <position position="654"/>
    </location>
    <ligand>
        <name>chlorophyll a</name>
        <dbReference type="ChEBI" id="CHEBI:58416"/>
        <label>B1</label>
    </ligand>
    <ligandPart>
        <name>Mg</name>
        <dbReference type="ChEBI" id="CHEBI:25107"/>
    </ligandPart>
</feature>
<feature type="binding site" description="axial binding residue" evidence="1">
    <location>
        <position position="662"/>
    </location>
    <ligand>
        <name>chlorophyll a</name>
        <dbReference type="ChEBI" id="CHEBI:58416"/>
        <label>B3</label>
    </ligand>
    <ligandPart>
        <name>Mg</name>
        <dbReference type="ChEBI" id="CHEBI:25107"/>
    </ligandPart>
</feature>
<feature type="binding site" evidence="1">
    <location>
        <position position="670"/>
    </location>
    <ligand>
        <name>chlorophyll a</name>
        <dbReference type="ChEBI" id="CHEBI:58416"/>
        <label>B3</label>
    </ligand>
</feature>
<feature type="binding site" evidence="1">
    <location>
        <position position="671"/>
    </location>
    <ligand>
        <name>phylloquinone</name>
        <dbReference type="ChEBI" id="CHEBI:18067"/>
        <label>B</label>
    </ligand>
</feature>
<comment type="function">
    <text evidence="1">PsaA and PsaB bind P700, the primary electron donor of photosystem I (PSI), as well as the electron acceptors A0, A1 and FX. PSI is a plastocyanin-ferredoxin oxidoreductase, converting photonic excitation into a charge separation, which transfers an electron from the donor P700 chlorophyll pair to the spectroscopically characterized acceptors A0, A1, FX, FA and FB in turn. Oxidized P700 is reduced on the lumenal side of the thylakoid membrane by plastocyanin.</text>
</comment>
<comment type="catalytic activity">
    <reaction evidence="1">
        <text>reduced [plastocyanin] + hnu + oxidized [2Fe-2S]-[ferredoxin] = oxidized [plastocyanin] + reduced [2Fe-2S]-[ferredoxin]</text>
        <dbReference type="Rhea" id="RHEA:30407"/>
        <dbReference type="Rhea" id="RHEA-COMP:10000"/>
        <dbReference type="Rhea" id="RHEA-COMP:10001"/>
        <dbReference type="Rhea" id="RHEA-COMP:10039"/>
        <dbReference type="Rhea" id="RHEA-COMP:10040"/>
        <dbReference type="ChEBI" id="CHEBI:29036"/>
        <dbReference type="ChEBI" id="CHEBI:30212"/>
        <dbReference type="ChEBI" id="CHEBI:33737"/>
        <dbReference type="ChEBI" id="CHEBI:33738"/>
        <dbReference type="ChEBI" id="CHEBI:49552"/>
        <dbReference type="EC" id="1.97.1.12"/>
    </reaction>
</comment>
<comment type="cofactor">
    <text evidence="1">P700 is a chlorophyll a/chlorophyll a' dimer, A0 is one or more chlorophyll a, A1 is one or both phylloquinones and FX is a shared 4Fe-4S iron-sulfur center.</text>
</comment>
<comment type="subunit">
    <text evidence="1">The PsaA/B heterodimer binds the P700 chlorophyll special pair and subsequent electron acceptors. PSI consists of a core antenna complex that captures photons, and an electron transfer chain that converts photonic excitation into a charge separation. The eukaryotic PSI reaction center is composed of at least 11 subunits.</text>
</comment>
<comment type="subcellular location">
    <subcellularLocation>
        <location evidence="1">Plastid</location>
        <location evidence="1">Chloroplast thylakoid membrane</location>
        <topology evidence="1">Multi-pass membrane protein</topology>
    </subcellularLocation>
</comment>
<comment type="similarity">
    <text evidence="1">Belongs to the PsaA/PsaB family.</text>
</comment>
<sequence>MALRFPRFSQGLAQDPTTRRIWFGIATAHDFESHDDITEERLYQNIFASHFGQLAIIFLWTSGNLFHVAWQGNFETWIQDPLHVRPIAHAIWDPHFGQPAVEAFTRGGALGPVNIAYSGVYQWWYTIGLRTNEDLYTGALFLLFLSALSLIGGWLHLQPKWKPRVSWFKNAESRLNHHLSGLFGVSSLAWTGHLVHVAIPASRGEYVRWNNFLNVLPHPQGLGPLFTGQWNLYAQNPDSSSHLFGTSQGSGTAILTLLGGFHPQTQSLWLTDMAHHHLAIAILFLIAGHMYRTNFGIGHSIKDLLEAHIPPGGRLGRGHKGLYDTINNSIHFQLGLALASLGVITSLVAQHMYSLPAYAFIAQDFTTQAALYTHHQYIAGFIMTGAFAHGAIFFIRDYNPEQNEDNVLARMLDHKEAIISHLSWASLFLGFHTLGLYVHNDVMLAFGTPEKQILIEPIFAQWIQSAHGKTSYGFDVLLSSTNGPAFNAGRSIWLPGWLSAINENSNSLFLTIGPGDFLVHHAIALGLHTTTLILVKGALDARGSKLMPDKKDFGYSFPCDGPGRGGTCDISAWDAFYLAVFWMLNTIGWVTFYWHWKHITLWQGNVSQFNESSTYLMGWLRDYLWLNSSQLINGYNPFGMNSLSVWAWMFLFGHLVWATGFMFLISWRGYWQELIETLAWAHERTPLANLIRWKDKPVALSIVQARLVGLAHFSVGYIFTYAAFLIASTSGKFG</sequence>
<proteinExistence type="inferred from homology"/>
<accession>A4QLJ3</accession>
<protein>
    <recommendedName>
        <fullName evidence="1">Photosystem I P700 chlorophyll a apoprotein A2</fullName>
        <ecNumber evidence="1">1.97.1.12</ecNumber>
    </recommendedName>
    <alternativeName>
        <fullName evidence="1">PSI-B</fullName>
    </alternativeName>
    <alternativeName>
        <fullName evidence="1">PsaB</fullName>
    </alternativeName>
</protein>
<geneLocation type="chloroplast"/>
<keyword id="KW-0004">4Fe-4S</keyword>
<keyword id="KW-0148">Chlorophyll</keyword>
<keyword id="KW-0150">Chloroplast</keyword>
<keyword id="KW-0157">Chromophore</keyword>
<keyword id="KW-0249">Electron transport</keyword>
<keyword id="KW-0408">Iron</keyword>
<keyword id="KW-0411">Iron-sulfur</keyword>
<keyword id="KW-0460">Magnesium</keyword>
<keyword id="KW-0472">Membrane</keyword>
<keyword id="KW-0479">Metal-binding</keyword>
<keyword id="KW-0560">Oxidoreductase</keyword>
<keyword id="KW-0602">Photosynthesis</keyword>
<keyword id="KW-0603">Photosystem I</keyword>
<keyword id="KW-0934">Plastid</keyword>
<keyword id="KW-0793">Thylakoid</keyword>
<keyword id="KW-0812">Transmembrane</keyword>
<keyword id="KW-1133">Transmembrane helix</keyword>
<keyword id="KW-0813">Transport</keyword>
<reference key="1">
    <citation type="submission" date="2007-03" db="EMBL/GenBank/DDBJ databases">
        <title>Sequencing analysis of Lobularia maritima chloroplast DNA.</title>
        <authorList>
            <person name="Hosouchi T."/>
            <person name="Tsuruoka H."/>
            <person name="Kotani H."/>
        </authorList>
    </citation>
    <scope>NUCLEOTIDE SEQUENCE [LARGE SCALE GENOMIC DNA]</scope>
</reference>